<evidence type="ECO:0000255" key="1">
    <source>
        <dbReference type="HAMAP-Rule" id="MF_03104"/>
    </source>
</evidence>
<evidence type="ECO:0000256" key="2">
    <source>
        <dbReference type="SAM" id="MobiDB-lite"/>
    </source>
</evidence>
<organism>
    <name type="scientific">Neosartorya fischeri (strain ATCC 1020 / DSM 3700 / CBS 544.65 / FGSC A1164 / JCM 1740 / NRRL 181 / WB 181)</name>
    <name type="common">Aspergillus fischerianus</name>
    <dbReference type="NCBI Taxonomy" id="331117"/>
    <lineage>
        <taxon>Eukaryota</taxon>
        <taxon>Fungi</taxon>
        <taxon>Dikarya</taxon>
        <taxon>Ascomycota</taxon>
        <taxon>Pezizomycotina</taxon>
        <taxon>Eurotiomycetes</taxon>
        <taxon>Eurotiomycetidae</taxon>
        <taxon>Eurotiales</taxon>
        <taxon>Aspergillaceae</taxon>
        <taxon>Aspergillus</taxon>
        <taxon>Aspergillus subgen. Fumigati</taxon>
    </lineage>
</organism>
<accession>A1D1T8</accession>
<sequence length="439" mass="48421">MSIDVNWRSATYGPDGEALAERIRSFIHDRFQQVALPRFIRSVQVHAFDFGTIPPELEIKDFCEPFADFYEEDDDDHTSDASEELGSEHSSQWNRTHPELNEPSYREDTAVNHSLRDPFPDGFPTSPLRSPLGEHLNPHFLPRAGTPGIPGGTSTLGYHLMSLGGLSGTQTPLAAVAGGNPFASGWSDSGMGPGNRGRSERHAGMKHQRAEPEIDTSNSTSRPSTANTLPSHPSSSSKNSGQGATGRNDHPSLHAGEHIEDPVAPGHLPLPPRMRERRPEDFQVLCHVKYAGDVRLSLTAEILLDYPMPSFVGLPLKLNVTGITFDGVAVIAYIRKRVHFCFLSAEDADALIGSEQQQQQESAGDDHRPQSRPDSSASASQKRHGGLLQEIRVESEIGRKEDGKQVLKNVGKVERFVLAQVRRIFEEELVYPSFWTFLI</sequence>
<feature type="chain" id="PRO_0000384295" description="Mitochondrial distribution and morphology protein 12">
    <location>
        <begin position="1"/>
        <end position="439"/>
    </location>
</feature>
<feature type="domain" description="SMP-LTD" evidence="1">
    <location>
        <begin position="1"/>
        <end position="439"/>
    </location>
</feature>
<feature type="region of interest" description="Disordered" evidence="2">
    <location>
        <begin position="70"/>
        <end position="102"/>
    </location>
</feature>
<feature type="region of interest" description="Disordered" evidence="2">
    <location>
        <begin position="184"/>
        <end position="274"/>
    </location>
</feature>
<feature type="region of interest" description="Disordered" evidence="2">
    <location>
        <begin position="353"/>
        <end position="386"/>
    </location>
</feature>
<feature type="compositionally biased region" description="Acidic residues" evidence="2">
    <location>
        <begin position="70"/>
        <end position="85"/>
    </location>
</feature>
<feature type="compositionally biased region" description="Basic and acidic residues" evidence="2">
    <location>
        <begin position="197"/>
        <end position="212"/>
    </location>
</feature>
<feature type="compositionally biased region" description="Polar residues" evidence="2">
    <location>
        <begin position="215"/>
        <end position="230"/>
    </location>
</feature>
<feature type="compositionally biased region" description="Low complexity" evidence="2">
    <location>
        <begin position="231"/>
        <end position="240"/>
    </location>
</feature>
<feature type="compositionally biased region" description="Basic and acidic residues" evidence="2">
    <location>
        <begin position="247"/>
        <end position="261"/>
    </location>
</feature>
<proteinExistence type="inferred from homology"/>
<reference key="1">
    <citation type="journal article" date="2008" name="PLoS Genet.">
        <title>Genomic islands in the pathogenic filamentous fungus Aspergillus fumigatus.</title>
        <authorList>
            <person name="Fedorova N.D."/>
            <person name="Khaldi N."/>
            <person name="Joardar V.S."/>
            <person name="Maiti R."/>
            <person name="Amedeo P."/>
            <person name="Anderson M.J."/>
            <person name="Crabtree J."/>
            <person name="Silva J.C."/>
            <person name="Badger J.H."/>
            <person name="Albarraq A."/>
            <person name="Angiuoli S."/>
            <person name="Bussey H."/>
            <person name="Bowyer P."/>
            <person name="Cotty P.J."/>
            <person name="Dyer P.S."/>
            <person name="Egan A."/>
            <person name="Galens K."/>
            <person name="Fraser-Liggett C.M."/>
            <person name="Haas B.J."/>
            <person name="Inman J.M."/>
            <person name="Kent R."/>
            <person name="Lemieux S."/>
            <person name="Malavazi I."/>
            <person name="Orvis J."/>
            <person name="Roemer T."/>
            <person name="Ronning C.M."/>
            <person name="Sundaram J.P."/>
            <person name="Sutton G."/>
            <person name="Turner G."/>
            <person name="Venter J.C."/>
            <person name="White O.R."/>
            <person name="Whitty B.R."/>
            <person name="Youngman P."/>
            <person name="Wolfe K.H."/>
            <person name="Goldman G.H."/>
            <person name="Wortman J.R."/>
            <person name="Jiang B."/>
            <person name="Denning D.W."/>
            <person name="Nierman W.C."/>
        </authorList>
    </citation>
    <scope>NUCLEOTIDE SEQUENCE [LARGE SCALE GENOMIC DNA]</scope>
    <source>
        <strain>ATCC 1020 / DSM 3700 / CBS 544.65 / FGSC A1164 / JCM 1740 / NRRL 181 / WB 181</strain>
    </source>
</reference>
<name>MDM12_NEOFI</name>
<comment type="function">
    <text evidence="1">Component of the ERMES/MDM complex, which serves as a molecular tether to connect the endoplasmic reticulum (ER) and mitochondria. Components of this complex are involved in the control of mitochondrial shape and protein biogenesis, and function in nonvesicular lipid trafficking between the ER and mitochondria. Mdm12 is required for the interaction of the ER-resident membrane protein mmm1 and the outer mitochondrial membrane-resident beta-barrel protein mdm10. The mdm12-mmm1 subcomplex functions in the major beta-barrel assembly pathway that is responsible for biogenesis of all mitochondrial outer membrane beta-barrel proteins, and acts in a late step after the SAM complex. The mdm10-mdm12-mmm1 subcomplex further acts in the TOM40-specific pathway after the action of the mdm12-mmm1 complex. Essential for establishing and maintaining the structure of mitochondria and maintenance of mtDNA nucleoids.</text>
</comment>
<comment type="subunit">
    <text evidence="1">Component of the ER-mitochondria encounter structure (ERMES) or MDM complex, composed of mmm1, mdm10, mdm12 and mdm34. A mmm1 homodimer associates with one molecule of mdm12 on each side in a pairwise head-to-tail manner, and the SMP-LTD domains of mmm1 and mdm12 generate a continuous hydrophobic tunnel for phospholipid trafficking.</text>
</comment>
<comment type="subcellular location">
    <subcellularLocation>
        <location evidence="1">Mitochondrion outer membrane</location>
        <topology evidence="1">Peripheral membrane protein</topology>
        <orientation evidence="1">Cytoplasmic side</orientation>
    </subcellularLocation>
    <subcellularLocation>
        <location evidence="1">Endoplasmic reticulum membrane</location>
        <topology evidence="1">Peripheral membrane protein</topology>
        <orientation evidence="1">Cytoplasmic side</orientation>
    </subcellularLocation>
    <text evidence="1">The ERMES/MDM complex localizes to a few discrete foci (around 10 per single cell), that represent mitochondria-endoplasmic reticulum junctions. These foci are often found next to mtDNA nucleoids.</text>
</comment>
<comment type="domain">
    <text evidence="1">The SMP-LTD domain is a barrel-like domain that can bind various types of glycerophospholipids in its interior and mediate their transfer between two adjacent bilayers.</text>
</comment>
<comment type="similarity">
    <text evidence="1">Belongs to the MDM12 family.</text>
</comment>
<protein>
    <recommendedName>
        <fullName evidence="1">Mitochondrial distribution and morphology protein 12</fullName>
    </recommendedName>
    <alternativeName>
        <fullName evidence="1">Mitochondrial inheritance component MDM12</fullName>
    </alternativeName>
</protein>
<gene>
    <name evidence="1" type="primary">mdm12</name>
    <name type="ORF">NFIA_010620</name>
</gene>
<dbReference type="EMBL" id="DS027688">
    <property type="protein sequence ID" value="EAW22381.1"/>
    <property type="molecule type" value="Genomic_DNA"/>
</dbReference>
<dbReference type="RefSeq" id="XP_001264278.1">
    <property type="nucleotide sequence ID" value="XM_001264277.1"/>
</dbReference>
<dbReference type="SMR" id="A1D1T8"/>
<dbReference type="STRING" id="331117.A1D1T8"/>
<dbReference type="EnsemblFungi" id="EAW22381">
    <property type="protein sequence ID" value="EAW22381"/>
    <property type="gene ID" value="NFIA_010620"/>
</dbReference>
<dbReference type="GeneID" id="4591358"/>
<dbReference type="KEGG" id="nfi:NFIA_010620"/>
<dbReference type="VEuPathDB" id="FungiDB:NFIA_010620"/>
<dbReference type="eggNOG" id="ENOG502S3PB">
    <property type="taxonomic scope" value="Eukaryota"/>
</dbReference>
<dbReference type="HOGENOM" id="CLU_026794_0_0_1"/>
<dbReference type="OMA" id="KRAHFCF"/>
<dbReference type="OrthoDB" id="3356905at2759"/>
<dbReference type="Proteomes" id="UP000006702">
    <property type="component" value="Unassembled WGS sequence"/>
</dbReference>
<dbReference type="GO" id="GO:0005789">
    <property type="term" value="C:endoplasmic reticulum membrane"/>
    <property type="evidence" value="ECO:0007669"/>
    <property type="project" value="UniProtKB-SubCell"/>
</dbReference>
<dbReference type="GO" id="GO:0032865">
    <property type="term" value="C:ERMES complex"/>
    <property type="evidence" value="ECO:0007669"/>
    <property type="project" value="UniProtKB-UniRule"/>
</dbReference>
<dbReference type="GO" id="GO:0008289">
    <property type="term" value="F:lipid binding"/>
    <property type="evidence" value="ECO:0007669"/>
    <property type="project" value="UniProtKB-KW"/>
</dbReference>
<dbReference type="GO" id="GO:0000002">
    <property type="term" value="P:mitochondrial genome maintenance"/>
    <property type="evidence" value="ECO:0007669"/>
    <property type="project" value="UniProtKB-UniRule"/>
</dbReference>
<dbReference type="GO" id="GO:1990456">
    <property type="term" value="P:mitochondrion-endoplasmic reticulum membrane tethering"/>
    <property type="evidence" value="ECO:0007669"/>
    <property type="project" value="TreeGrafter"/>
</dbReference>
<dbReference type="GO" id="GO:0015914">
    <property type="term" value="P:phospholipid transport"/>
    <property type="evidence" value="ECO:0007669"/>
    <property type="project" value="TreeGrafter"/>
</dbReference>
<dbReference type="GO" id="GO:0045040">
    <property type="term" value="P:protein insertion into mitochondrial outer membrane"/>
    <property type="evidence" value="ECO:0007669"/>
    <property type="project" value="UniProtKB-UniRule"/>
</dbReference>
<dbReference type="CDD" id="cd21672">
    <property type="entry name" value="SMP_Mdm12"/>
    <property type="match status" value="1"/>
</dbReference>
<dbReference type="HAMAP" id="MF_03104">
    <property type="entry name" value="Mdm12"/>
    <property type="match status" value="1"/>
</dbReference>
<dbReference type="InterPro" id="IPR027532">
    <property type="entry name" value="Mdm12"/>
</dbReference>
<dbReference type="InterPro" id="IPR019411">
    <property type="entry name" value="MMM1_dom"/>
</dbReference>
<dbReference type="InterPro" id="IPR031468">
    <property type="entry name" value="SMP_LBD"/>
</dbReference>
<dbReference type="PANTHER" id="PTHR28204">
    <property type="entry name" value="MITOCHONDRIAL DISTRIBUTION AND MORPHOLOGY PROTEIN 12"/>
    <property type="match status" value="1"/>
</dbReference>
<dbReference type="PANTHER" id="PTHR28204:SF1">
    <property type="entry name" value="MITOCHONDRIAL DISTRIBUTION AND MORPHOLOGY PROTEIN 12"/>
    <property type="match status" value="1"/>
</dbReference>
<dbReference type="Pfam" id="PF10296">
    <property type="entry name" value="MMM1"/>
    <property type="match status" value="1"/>
</dbReference>
<dbReference type="PROSITE" id="PS51847">
    <property type="entry name" value="SMP"/>
    <property type="match status" value="1"/>
</dbReference>
<keyword id="KW-0256">Endoplasmic reticulum</keyword>
<keyword id="KW-0445">Lipid transport</keyword>
<keyword id="KW-0446">Lipid-binding</keyword>
<keyword id="KW-0472">Membrane</keyword>
<keyword id="KW-0496">Mitochondrion</keyword>
<keyword id="KW-1000">Mitochondrion outer membrane</keyword>
<keyword id="KW-1185">Reference proteome</keyword>
<keyword id="KW-0813">Transport</keyword>